<name>CH2BA_XENLA</name>
<organism>
    <name type="scientific">Xenopus laevis</name>
    <name type="common">African clawed frog</name>
    <dbReference type="NCBI Taxonomy" id="8355"/>
    <lineage>
        <taxon>Eukaryota</taxon>
        <taxon>Metazoa</taxon>
        <taxon>Chordata</taxon>
        <taxon>Craniata</taxon>
        <taxon>Vertebrata</taxon>
        <taxon>Euteleostomi</taxon>
        <taxon>Amphibia</taxon>
        <taxon>Batrachia</taxon>
        <taxon>Anura</taxon>
        <taxon>Pipoidea</taxon>
        <taxon>Pipidae</taxon>
        <taxon>Xenopodinae</taxon>
        <taxon>Xenopus</taxon>
        <taxon>Xenopus</taxon>
    </lineage>
</organism>
<dbReference type="EMBL" id="BC054301">
    <property type="protein sequence ID" value="AAH54301.1"/>
    <property type="molecule type" value="mRNA"/>
</dbReference>
<dbReference type="SMR" id="Q7SYR0"/>
<dbReference type="DNASU" id="380442"/>
<dbReference type="GeneID" id="380442"/>
<dbReference type="KEGG" id="xla:380442"/>
<dbReference type="AGR" id="Xenbase:XB-GENE-6253620"/>
<dbReference type="CTD" id="380442"/>
<dbReference type="Xenbase" id="XB-GENE-6253620">
    <property type="gene designation" value="chmp2b.S"/>
</dbReference>
<dbReference type="OMA" id="EIMRMEM"/>
<dbReference type="OrthoDB" id="5594417at2759"/>
<dbReference type="Proteomes" id="UP000186698">
    <property type="component" value="Chromosome 2S"/>
</dbReference>
<dbReference type="Bgee" id="380442">
    <property type="expression patterns" value="Expressed in zone of skin and 19 other cell types or tissues"/>
</dbReference>
<dbReference type="GO" id="GO:0005829">
    <property type="term" value="C:cytosol"/>
    <property type="evidence" value="ECO:0007669"/>
    <property type="project" value="UniProtKB-SubCell"/>
</dbReference>
<dbReference type="GO" id="GO:0000815">
    <property type="term" value="C:ESCRT III complex"/>
    <property type="evidence" value="ECO:0000318"/>
    <property type="project" value="GO_Central"/>
</dbReference>
<dbReference type="GO" id="GO:0031902">
    <property type="term" value="C:late endosome membrane"/>
    <property type="evidence" value="ECO:0007669"/>
    <property type="project" value="UniProtKB-SubCell"/>
</dbReference>
<dbReference type="GO" id="GO:0005771">
    <property type="term" value="C:multivesicular body"/>
    <property type="evidence" value="ECO:0000318"/>
    <property type="project" value="GO_Central"/>
</dbReference>
<dbReference type="GO" id="GO:0032509">
    <property type="term" value="P:endosome transport via multivesicular body sorting pathway"/>
    <property type="evidence" value="ECO:0000318"/>
    <property type="project" value="GO_Central"/>
</dbReference>
<dbReference type="GO" id="GO:0045324">
    <property type="term" value="P:late endosome to vacuole transport"/>
    <property type="evidence" value="ECO:0000318"/>
    <property type="project" value="GO_Central"/>
</dbReference>
<dbReference type="GO" id="GO:0015031">
    <property type="term" value="P:protein transport"/>
    <property type="evidence" value="ECO:0000318"/>
    <property type="project" value="GO_Central"/>
</dbReference>
<dbReference type="Gene3D" id="6.10.140.1230">
    <property type="match status" value="1"/>
</dbReference>
<dbReference type="InterPro" id="IPR005024">
    <property type="entry name" value="Snf7_fam"/>
</dbReference>
<dbReference type="PANTHER" id="PTHR10476">
    <property type="entry name" value="CHARGED MULTIVESICULAR BODY PROTEIN"/>
    <property type="match status" value="1"/>
</dbReference>
<dbReference type="Pfam" id="PF03357">
    <property type="entry name" value="Snf7"/>
    <property type="match status" value="1"/>
</dbReference>
<comment type="function">
    <text evidence="1">Probable core component of the endosomal sorting required for transport complex III (ESCRT-III) which is involved in multivesicular bodies (MVBs) formation and sorting of endosomal cargo proteins into MVBs. MVBs contain intraluminal vesicles (ILVs) that are generated by invagination and scission from the limiting membrane of the endosome and mostly are delivered to lysosomes enabling degradation of membrane proteins, such as stimulated growth factor receptors, lysosomal enzymes and lipids (By similarity).</text>
</comment>
<comment type="subunit">
    <text evidence="1">Probable core component of the endosomal sorting required for transport complex III (ESCRT-III). ESCRT-III components are thought to multimerize to form a flat lattice on the perimeter membrane of the endosome (By similarity).</text>
</comment>
<comment type="subcellular location">
    <subcellularLocation>
        <location evidence="1">Cytoplasm</location>
        <location evidence="1">Cytosol</location>
    </subcellularLocation>
    <subcellularLocation>
        <location evidence="1">Late endosome membrane</location>
        <topology evidence="1">Peripheral membrane protein</topology>
    </subcellularLocation>
</comment>
<comment type="similarity">
    <text evidence="4">Belongs to the SNF7 family.</text>
</comment>
<accession>Q7SYR0</accession>
<keyword id="KW-0175">Coiled coil</keyword>
<keyword id="KW-0963">Cytoplasm</keyword>
<keyword id="KW-0967">Endosome</keyword>
<keyword id="KW-0472">Membrane</keyword>
<keyword id="KW-0653">Protein transport</keyword>
<keyword id="KW-1185">Reference proteome</keyword>
<keyword id="KW-0813">Transport</keyword>
<sequence length="214" mass="23850">MASLFKKKTVDDIIKDQNKELKGQQRAITRDRTALEKQEKQLEMEIKKMAKAGNKDACKVLAKQLVQLRKQKTRTYAVSSKVTSMSTQTKVMSSQMKMAGAMSTTAKTMQAVNKKMDPQKTLQTMQNFQKENMKMEMTEEMINDTLDDIFDASEDEEESQDIVNQVLDEIGIEISGKMAKAPSAAKGLPSASASKSTGISDEEIERQLKALGVD</sequence>
<protein>
    <recommendedName>
        <fullName>Charged multivesicular body protein 2b-A</fullName>
    </recommendedName>
    <alternativeName>
        <fullName>Chromatin-modifying protein 2b-A</fullName>
        <shortName>CHMP2b-A</shortName>
    </alternativeName>
</protein>
<gene>
    <name type="primary">chmp2b-a</name>
</gene>
<evidence type="ECO:0000250" key="1"/>
<evidence type="ECO:0000255" key="2"/>
<evidence type="ECO:0000256" key="3">
    <source>
        <dbReference type="SAM" id="MobiDB-lite"/>
    </source>
</evidence>
<evidence type="ECO:0000305" key="4"/>
<feature type="chain" id="PRO_0000211474" description="Charged multivesicular body protein 2b-A">
    <location>
        <begin position="1"/>
        <end position="214"/>
    </location>
</feature>
<feature type="region of interest" description="Disordered" evidence="3">
    <location>
        <begin position="178"/>
        <end position="214"/>
    </location>
</feature>
<feature type="coiled-coil region" evidence="2">
    <location>
        <begin position="25"/>
        <end position="55"/>
    </location>
</feature>
<feature type="short sequence motif" description="MIT-interacting motif">
    <location>
        <begin position="202"/>
        <end position="212"/>
    </location>
</feature>
<reference key="1">
    <citation type="submission" date="2004-08" db="EMBL/GenBank/DDBJ databases">
        <authorList>
            <consortium name="NIH - Xenopus Gene Collection (XGC) project"/>
        </authorList>
    </citation>
    <scope>NUCLEOTIDE SEQUENCE [LARGE SCALE MRNA]</scope>
</reference>
<proteinExistence type="evidence at transcript level"/>